<reference key="1">
    <citation type="journal article" date="2005" name="BMC Genomics">
        <title>Characterization of 954 bovine full-CDS cDNA sequences.</title>
        <authorList>
            <person name="Harhay G.P."/>
            <person name="Sonstegard T.S."/>
            <person name="Keele J.W."/>
            <person name="Heaton M.P."/>
            <person name="Clawson M.L."/>
            <person name="Snelling W.M."/>
            <person name="Wiedmann R.T."/>
            <person name="Van Tassell C.P."/>
            <person name="Smith T.P.L."/>
        </authorList>
    </citation>
    <scope>NUCLEOTIDE SEQUENCE [LARGE SCALE MRNA]</scope>
</reference>
<organism>
    <name type="scientific">Bos taurus</name>
    <name type="common">Bovine</name>
    <dbReference type="NCBI Taxonomy" id="9913"/>
    <lineage>
        <taxon>Eukaryota</taxon>
        <taxon>Metazoa</taxon>
        <taxon>Chordata</taxon>
        <taxon>Craniata</taxon>
        <taxon>Vertebrata</taxon>
        <taxon>Euteleostomi</taxon>
        <taxon>Mammalia</taxon>
        <taxon>Eutheria</taxon>
        <taxon>Laurasiatheria</taxon>
        <taxon>Artiodactyla</taxon>
        <taxon>Ruminantia</taxon>
        <taxon>Pecora</taxon>
        <taxon>Bovidae</taxon>
        <taxon>Bovinae</taxon>
        <taxon>Bos</taxon>
    </lineage>
</organism>
<sequence>MDEMATTQISKDELDELKEAFAKVDLNSNGFICDYELHELFKEANMPLPGYKVREIIQKLMLDGDRNKDGKISFDEFVYIFQEVKSSDIAKTFRKAINRKEGICALGGTSELSSEGTQHSYSEEEKYAFVNWINKALENDPDCRHVIPMNPNTDDLFKAVGDGIVLCKMINLSVPDTIDERAINKKKLTPFIIQENLNLALNSASAIGCHVVNIGAEDLRAGKPHLVLGLLWQIIKIGLFADIELSRNEALAALLRDGETLEELMKLSPEELLLRWANFHLENSGWQKINNFSADIKDSKAYFHLLNQIAPKGQKEGEPRIDINMSGFNETDDLKRAESMLQQADKLGCRQFVTPADVVSGNPKLNLAFVANLFNKYPALTKPENQDIDWTLLEGETREERTFRNWMNSLGVNPHVNHLYADLQDALVILQLYERIKVPVDWSKVNKPPYPKLGANMKKLENCNYAVELGKHPAKFSLVGIGGQDLNDGNQTLTLALVWQLMRRYTLNVLEDLGDGQKANDDIIVSWVNRTLNEAGKSTSIQSFKDKTISSSLAVVDLIDAIQPGCINYDLVKSGTLTEDDKHNNAKYAVSMARRIGARVYALPEDLVEVKPKMVMTVFACLMGRGMKRV</sequence>
<protein>
    <recommendedName>
        <fullName>Plastin-3</fullName>
    </recommendedName>
    <alternativeName>
        <fullName>T-plastin</fullName>
    </alternativeName>
</protein>
<evidence type="ECO:0000250" key="1"/>
<evidence type="ECO:0000250" key="2">
    <source>
        <dbReference type="UniProtKB" id="P13797"/>
    </source>
</evidence>
<evidence type="ECO:0000250" key="3">
    <source>
        <dbReference type="UniProtKB" id="Q99K51"/>
    </source>
</evidence>
<evidence type="ECO:0000255" key="4">
    <source>
        <dbReference type="PROSITE-ProRule" id="PRU00044"/>
    </source>
</evidence>
<evidence type="ECO:0000255" key="5">
    <source>
        <dbReference type="PROSITE-ProRule" id="PRU00448"/>
    </source>
</evidence>
<keyword id="KW-0009">Actin-binding</keyword>
<keyword id="KW-0106">Calcium</keyword>
<keyword id="KW-0963">Cytoplasm</keyword>
<keyword id="KW-0479">Metal-binding</keyword>
<keyword id="KW-0597">Phosphoprotein</keyword>
<keyword id="KW-1185">Reference proteome</keyword>
<keyword id="KW-0677">Repeat</keyword>
<proteinExistence type="evidence at transcript level"/>
<name>PLST_BOVIN</name>
<comment type="function">
    <text evidence="1">Actin-bundling protein.</text>
</comment>
<comment type="subunit">
    <text evidence="1">Monomer.</text>
</comment>
<comment type="subcellular location">
    <subcellularLocation>
        <location>Cytoplasm</location>
    </subcellularLocation>
</comment>
<feature type="chain" id="PRO_0000370191" description="Plastin-3">
    <location>
        <begin position="1"/>
        <end position="630"/>
    </location>
</feature>
<feature type="domain" description="EF-hand 1" evidence="5">
    <location>
        <begin position="12"/>
        <end position="47"/>
    </location>
</feature>
<feature type="domain" description="EF-hand 2" evidence="5">
    <location>
        <begin position="52"/>
        <end position="87"/>
    </location>
</feature>
<feature type="domain" description="Calponin-homology (CH) 1" evidence="4">
    <location>
        <begin position="123"/>
        <end position="239"/>
    </location>
</feature>
<feature type="domain" description="Calponin-homology (CH) 2" evidence="4">
    <location>
        <begin position="267"/>
        <end position="378"/>
    </location>
</feature>
<feature type="domain" description="Calponin-homology (CH) 3" evidence="4">
    <location>
        <begin position="397"/>
        <end position="506"/>
    </location>
</feature>
<feature type="domain" description="Calponin-homology (CH) 4" evidence="4">
    <location>
        <begin position="518"/>
        <end position="627"/>
    </location>
</feature>
<feature type="region of interest" description="Actin-binding 1">
    <location>
        <begin position="109"/>
        <end position="382"/>
    </location>
</feature>
<feature type="region of interest" description="Actin-binding 2">
    <location>
        <begin position="383"/>
        <end position="627"/>
    </location>
</feature>
<feature type="binding site" evidence="5">
    <location>
        <position position="25"/>
    </location>
    <ligand>
        <name>Ca(2+)</name>
        <dbReference type="ChEBI" id="CHEBI:29108"/>
        <label>1</label>
    </ligand>
</feature>
<feature type="binding site" evidence="5">
    <location>
        <position position="27"/>
    </location>
    <ligand>
        <name>Ca(2+)</name>
        <dbReference type="ChEBI" id="CHEBI:29108"/>
        <label>1</label>
    </ligand>
</feature>
<feature type="binding site" evidence="5">
    <location>
        <position position="29"/>
    </location>
    <ligand>
        <name>Ca(2+)</name>
        <dbReference type="ChEBI" id="CHEBI:29108"/>
        <label>1</label>
    </ligand>
</feature>
<feature type="binding site" evidence="5">
    <location>
        <position position="36"/>
    </location>
    <ligand>
        <name>Ca(2+)</name>
        <dbReference type="ChEBI" id="CHEBI:29108"/>
        <label>1</label>
    </ligand>
</feature>
<feature type="binding site" evidence="5">
    <location>
        <position position="65"/>
    </location>
    <ligand>
        <name>Ca(2+)</name>
        <dbReference type="ChEBI" id="CHEBI:29108"/>
        <label>2</label>
    </ligand>
</feature>
<feature type="binding site" evidence="5">
    <location>
        <position position="67"/>
    </location>
    <ligand>
        <name>Ca(2+)</name>
        <dbReference type="ChEBI" id="CHEBI:29108"/>
        <label>2</label>
    </ligand>
</feature>
<feature type="binding site" evidence="5">
    <location>
        <position position="69"/>
    </location>
    <ligand>
        <name>Ca(2+)</name>
        <dbReference type="ChEBI" id="CHEBI:29108"/>
        <label>2</label>
    </ligand>
</feature>
<feature type="binding site" evidence="5">
    <location>
        <position position="71"/>
    </location>
    <ligand>
        <name>Ca(2+)</name>
        <dbReference type="ChEBI" id="CHEBI:29108"/>
        <label>2</label>
    </ligand>
</feature>
<feature type="binding site" evidence="5">
    <location>
        <position position="76"/>
    </location>
    <ligand>
        <name>Ca(2+)</name>
        <dbReference type="ChEBI" id="CHEBI:29108"/>
        <label>2</label>
    </ligand>
</feature>
<feature type="modified residue" description="Phosphoserine" evidence="3">
    <location>
        <position position="268"/>
    </location>
</feature>
<feature type="modified residue" description="Phosphoserine" evidence="2">
    <location>
        <position position="293"/>
    </location>
</feature>
<feature type="modified residue" description="Phosphoserine" evidence="2">
    <location>
        <position position="326"/>
    </location>
</feature>
<feature type="modified residue" description="Phosphoserine" evidence="2">
    <location>
        <position position="339"/>
    </location>
</feature>
<feature type="modified residue" description="Phosphothreonine" evidence="2">
    <location>
        <position position="391"/>
    </location>
</feature>
<accession>A7E3Q8</accession>
<dbReference type="EMBL" id="BT030679">
    <property type="protein sequence ID" value="ABS44995.1"/>
    <property type="molecule type" value="mRNA"/>
</dbReference>
<dbReference type="RefSeq" id="XP_005227971.1">
    <property type="nucleotide sequence ID" value="XM_005227914.5"/>
</dbReference>
<dbReference type="RefSeq" id="XP_005227972.1">
    <property type="nucleotide sequence ID" value="XM_005227915.5"/>
</dbReference>
<dbReference type="SMR" id="A7E3Q8"/>
<dbReference type="FunCoup" id="A7E3Q8">
    <property type="interactions" value="1821"/>
</dbReference>
<dbReference type="STRING" id="9913.ENSBTAP00000031879"/>
<dbReference type="PaxDb" id="9913-ENSBTAP00000031879"/>
<dbReference type="PeptideAtlas" id="A7E3Q8"/>
<dbReference type="Ensembl" id="ENSBTAT00000055249.2">
    <property type="protein sequence ID" value="ENSBTAP00000050406.1"/>
    <property type="gene ID" value="ENSBTAG00000011613.7"/>
</dbReference>
<dbReference type="GeneID" id="505687"/>
<dbReference type="CTD" id="5358"/>
<dbReference type="VEuPathDB" id="HostDB:ENSBTAG00000011613"/>
<dbReference type="VGNC" id="VGNC:33052">
    <property type="gene designation" value="PLS3"/>
</dbReference>
<dbReference type="eggNOG" id="KOG0046">
    <property type="taxonomic scope" value="Eukaryota"/>
</dbReference>
<dbReference type="GeneTree" id="ENSGT00950000183097"/>
<dbReference type="HOGENOM" id="CLU_015284_2_0_1"/>
<dbReference type="InParanoid" id="A7E3Q8"/>
<dbReference type="OrthoDB" id="431378at2759"/>
<dbReference type="Proteomes" id="UP000009136">
    <property type="component" value="Chromosome X"/>
</dbReference>
<dbReference type="Bgee" id="ENSBTAG00000011613">
    <property type="expression patterns" value="Expressed in trachea and 101 other cell types or tissues"/>
</dbReference>
<dbReference type="GO" id="GO:0005884">
    <property type="term" value="C:actin filament"/>
    <property type="evidence" value="ECO:0000318"/>
    <property type="project" value="GO_Central"/>
</dbReference>
<dbReference type="GO" id="GO:0032432">
    <property type="term" value="C:actin filament bundle"/>
    <property type="evidence" value="ECO:0000318"/>
    <property type="project" value="GO_Central"/>
</dbReference>
<dbReference type="GO" id="GO:0005737">
    <property type="term" value="C:cytoplasm"/>
    <property type="evidence" value="ECO:0000318"/>
    <property type="project" value="GO_Central"/>
</dbReference>
<dbReference type="GO" id="GO:0051015">
    <property type="term" value="F:actin filament binding"/>
    <property type="evidence" value="ECO:0000318"/>
    <property type="project" value="GO_Central"/>
</dbReference>
<dbReference type="GO" id="GO:0005509">
    <property type="term" value="F:calcium ion binding"/>
    <property type="evidence" value="ECO:0007669"/>
    <property type="project" value="InterPro"/>
</dbReference>
<dbReference type="GO" id="GO:0051017">
    <property type="term" value="P:actin filament bundle assembly"/>
    <property type="evidence" value="ECO:0000318"/>
    <property type="project" value="GO_Central"/>
</dbReference>
<dbReference type="GO" id="GO:0051639">
    <property type="term" value="P:actin filament network formation"/>
    <property type="evidence" value="ECO:0000318"/>
    <property type="project" value="GO_Central"/>
</dbReference>
<dbReference type="CDD" id="cd21328">
    <property type="entry name" value="CH_PLS3_rpt2"/>
    <property type="match status" value="1"/>
</dbReference>
<dbReference type="CDD" id="cd21331">
    <property type="entry name" value="CH_PLS3_rpt3"/>
    <property type="match status" value="1"/>
</dbReference>
<dbReference type="CDD" id="cd21334">
    <property type="entry name" value="CH_PLS3_rpt4"/>
    <property type="match status" value="1"/>
</dbReference>
<dbReference type="CDD" id="cd21292">
    <property type="entry name" value="CH_PLS_rpt1"/>
    <property type="match status" value="1"/>
</dbReference>
<dbReference type="CDD" id="cd00051">
    <property type="entry name" value="EFh"/>
    <property type="match status" value="1"/>
</dbReference>
<dbReference type="FunFam" id="1.10.238.10:FF:000059">
    <property type="entry name" value="Plastin 1"/>
    <property type="match status" value="1"/>
</dbReference>
<dbReference type="FunFam" id="1.10.418.10:FF:000010">
    <property type="entry name" value="Plastin-3 isoform 1"/>
    <property type="match status" value="1"/>
</dbReference>
<dbReference type="FunFam" id="1.10.418.10:FF:000012">
    <property type="entry name" value="Plastin-3 isoform 1"/>
    <property type="match status" value="1"/>
</dbReference>
<dbReference type="FunFam" id="1.10.418.10:FF:000014">
    <property type="entry name" value="Plastin-3 isoform 1"/>
    <property type="match status" value="1"/>
</dbReference>
<dbReference type="FunFam" id="1.10.418.10:FF:000025">
    <property type="entry name" value="Plastin-3 isoform 1"/>
    <property type="match status" value="1"/>
</dbReference>
<dbReference type="Gene3D" id="1.10.418.10">
    <property type="entry name" value="Calponin-like domain"/>
    <property type="match status" value="4"/>
</dbReference>
<dbReference type="Gene3D" id="1.10.238.10">
    <property type="entry name" value="EF-hand"/>
    <property type="match status" value="1"/>
</dbReference>
<dbReference type="InterPro" id="IPR001589">
    <property type="entry name" value="Actinin_actin-bd_CS"/>
</dbReference>
<dbReference type="InterPro" id="IPR001715">
    <property type="entry name" value="CH_dom"/>
</dbReference>
<dbReference type="InterPro" id="IPR036872">
    <property type="entry name" value="CH_dom_sf"/>
</dbReference>
<dbReference type="InterPro" id="IPR011992">
    <property type="entry name" value="EF-hand-dom_pair"/>
</dbReference>
<dbReference type="InterPro" id="IPR018247">
    <property type="entry name" value="EF_Hand_1_Ca_BS"/>
</dbReference>
<dbReference type="InterPro" id="IPR002048">
    <property type="entry name" value="EF_hand_dom"/>
</dbReference>
<dbReference type="InterPro" id="IPR039959">
    <property type="entry name" value="Fimbrin/Plastin"/>
</dbReference>
<dbReference type="PANTHER" id="PTHR19961">
    <property type="entry name" value="FIMBRIN/PLASTIN"/>
    <property type="match status" value="1"/>
</dbReference>
<dbReference type="PANTHER" id="PTHR19961:SF32">
    <property type="entry name" value="PLASTIN-3"/>
    <property type="match status" value="1"/>
</dbReference>
<dbReference type="Pfam" id="PF00307">
    <property type="entry name" value="CH"/>
    <property type="match status" value="4"/>
</dbReference>
<dbReference type="Pfam" id="PF13499">
    <property type="entry name" value="EF-hand_7"/>
    <property type="match status" value="1"/>
</dbReference>
<dbReference type="SMART" id="SM00033">
    <property type="entry name" value="CH"/>
    <property type="match status" value="4"/>
</dbReference>
<dbReference type="SMART" id="SM00054">
    <property type="entry name" value="EFh"/>
    <property type="match status" value="2"/>
</dbReference>
<dbReference type="SUPFAM" id="SSF47576">
    <property type="entry name" value="Calponin-homology domain, CH-domain"/>
    <property type="match status" value="1"/>
</dbReference>
<dbReference type="SUPFAM" id="SSF47473">
    <property type="entry name" value="EF-hand"/>
    <property type="match status" value="1"/>
</dbReference>
<dbReference type="PROSITE" id="PS00019">
    <property type="entry name" value="ACTININ_1"/>
    <property type="match status" value="2"/>
</dbReference>
<dbReference type="PROSITE" id="PS00020">
    <property type="entry name" value="ACTININ_2"/>
    <property type="match status" value="2"/>
</dbReference>
<dbReference type="PROSITE" id="PS50021">
    <property type="entry name" value="CH"/>
    <property type="match status" value="4"/>
</dbReference>
<dbReference type="PROSITE" id="PS00018">
    <property type="entry name" value="EF_HAND_1"/>
    <property type="match status" value="2"/>
</dbReference>
<dbReference type="PROSITE" id="PS50222">
    <property type="entry name" value="EF_HAND_2"/>
    <property type="match status" value="2"/>
</dbReference>
<gene>
    <name type="primary">PLS3</name>
</gene>